<sequence>MKLQLVAVGTKMPDWVQTGFTEYLRRFPKDMPFELIEIPAGKRGKNADIKRILDKEGEQMLAAAGKNRIVTLDIPGKPWDTPQLAAELERWKLDGRDVSLLIGGPEGLSPACKAAAEQSWSLSALTLPHPLVRVLVAESLYRAWSITTNHPYHRE</sequence>
<dbReference type="EC" id="2.1.1.177" evidence="1"/>
<dbReference type="EMBL" id="CP001063">
    <property type="protein sequence ID" value="ACD07293.1"/>
    <property type="molecule type" value="Genomic_DNA"/>
</dbReference>
<dbReference type="RefSeq" id="WP_000776104.1">
    <property type="nucleotide sequence ID" value="NC_010658.1"/>
</dbReference>
<dbReference type="SMR" id="B2TU82"/>
<dbReference type="STRING" id="344609.SbBS512_E0615"/>
<dbReference type="GeneID" id="93776846"/>
<dbReference type="KEGG" id="sbc:SbBS512_E0615"/>
<dbReference type="HOGENOM" id="CLU_100552_1_0_6"/>
<dbReference type="Proteomes" id="UP000001030">
    <property type="component" value="Chromosome"/>
</dbReference>
<dbReference type="GO" id="GO:0005737">
    <property type="term" value="C:cytoplasm"/>
    <property type="evidence" value="ECO:0007669"/>
    <property type="project" value="UniProtKB-SubCell"/>
</dbReference>
<dbReference type="GO" id="GO:0070038">
    <property type="term" value="F:rRNA (pseudouridine-N3-)-methyltransferase activity"/>
    <property type="evidence" value="ECO:0007669"/>
    <property type="project" value="UniProtKB-UniRule"/>
</dbReference>
<dbReference type="CDD" id="cd18081">
    <property type="entry name" value="RlmH-like"/>
    <property type="match status" value="1"/>
</dbReference>
<dbReference type="FunFam" id="3.40.1280.10:FF:000004">
    <property type="entry name" value="Ribosomal RNA large subunit methyltransferase H"/>
    <property type="match status" value="1"/>
</dbReference>
<dbReference type="Gene3D" id="3.40.1280.10">
    <property type="match status" value="1"/>
</dbReference>
<dbReference type="HAMAP" id="MF_00658">
    <property type="entry name" value="23SrRNA_methyltr_H"/>
    <property type="match status" value="1"/>
</dbReference>
<dbReference type="InterPro" id="IPR029028">
    <property type="entry name" value="Alpha/beta_knot_MTases"/>
</dbReference>
<dbReference type="InterPro" id="IPR003742">
    <property type="entry name" value="RlmH-like"/>
</dbReference>
<dbReference type="InterPro" id="IPR029026">
    <property type="entry name" value="tRNA_m1G_MTases_N"/>
</dbReference>
<dbReference type="NCBIfam" id="NF000984">
    <property type="entry name" value="PRK00103.1-1"/>
    <property type="match status" value="1"/>
</dbReference>
<dbReference type="NCBIfam" id="NF000986">
    <property type="entry name" value="PRK00103.1-4"/>
    <property type="match status" value="1"/>
</dbReference>
<dbReference type="NCBIfam" id="TIGR00246">
    <property type="entry name" value="tRNA_RlmH_YbeA"/>
    <property type="match status" value="1"/>
</dbReference>
<dbReference type="PANTHER" id="PTHR33603">
    <property type="entry name" value="METHYLTRANSFERASE"/>
    <property type="match status" value="1"/>
</dbReference>
<dbReference type="PANTHER" id="PTHR33603:SF1">
    <property type="entry name" value="RIBOSOMAL RNA LARGE SUBUNIT METHYLTRANSFERASE H"/>
    <property type="match status" value="1"/>
</dbReference>
<dbReference type="Pfam" id="PF02590">
    <property type="entry name" value="SPOUT_MTase"/>
    <property type="match status" value="1"/>
</dbReference>
<dbReference type="PIRSF" id="PIRSF004505">
    <property type="entry name" value="MT_bac"/>
    <property type="match status" value="1"/>
</dbReference>
<dbReference type="SUPFAM" id="SSF75217">
    <property type="entry name" value="alpha/beta knot"/>
    <property type="match status" value="1"/>
</dbReference>
<proteinExistence type="inferred from homology"/>
<organism>
    <name type="scientific">Shigella boydii serotype 18 (strain CDC 3083-94 / BS512)</name>
    <dbReference type="NCBI Taxonomy" id="344609"/>
    <lineage>
        <taxon>Bacteria</taxon>
        <taxon>Pseudomonadati</taxon>
        <taxon>Pseudomonadota</taxon>
        <taxon>Gammaproteobacteria</taxon>
        <taxon>Enterobacterales</taxon>
        <taxon>Enterobacteriaceae</taxon>
        <taxon>Shigella</taxon>
    </lineage>
</organism>
<protein>
    <recommendedName>
        <fullName evidence="1">Ribosomal RNA large subunit methyltransferase H</fullName>
        <ecNumber evidence="1">2.1.1.177</ecNumber>
    </recommendedName>
    <alternativeName>
        <fullName evidence="1">23S rRNA (pseudouridine1915-N3)-methyltransferase</fullName>
    </alternativeName>
    <alternativeName>
        <fullName evidence="1">23S rRNA m3Psi1915 methyltransferase</fullName>
    </alternativeName>
    <alternativeName>
        <fullName evidence="1">rRNA (pseudouridine-N3-)-methyltransferase RlmH</fullName>
    </alternativeName>
</protein>
<name>RLMH_SHIB3</name>
<reference key="1">
    <citation type="submission" date="2008-05" db="EMBL/GenBank/DDBJ databases">
        <title>Complete sequence of Shigella boydii serotype 18 strain BS512.</title>
        <authorList>
            <person name="Rasko D.A."/>
            <person name="Rosovitz M."/>
            <person name="Maurelli A.T."/>
            <person name="Myers G."/>
            <person name="Seshadri R."/>
            <person name="Cer R."/>
            <person name="Jiang L."/>
            <person name="Ravel J."/>
            <person name="Sebastian Y."/>
        </authorList>
    </citation>
    <scope>NUCLEOTIDE SEQUENCE [LARGE SCALE GENOMIC DNA]</scope>
    <source>
        <strain>CDC 3083-94 / BS512</strain>
    </source>
</reference>
<evidence type="ECO:0000255" key="1">
    <source>
        <dbReference type="HAMAP-Rule" id="MF_00658"/>
    </source>
</evidence>
<comment type="function">
    <text evidence="1">Specifically methylates the pseudouridine at position 1915 (m3Psi1915) in 23S rRNA.</text>
</comment>
<comment type="catalytic activity">
    <reaction evidence="1">
        <text>pseudouridine(1915) in 23S rRNA + S-adenosyl-L-methionine = N(3)-methylpseudouridine(1915) in 23S rRNA + S-adenosyl-L-homocysteine + H(+)</text>
        <dbReference type="Rhea" id="RHEA:42752"/>
        <dbReference type="Rhea" id="RHEA-COMP:10221"/>
        <dbReference type="Rhea" id="RHEA-COMP:10222"/>
        <dbReference type="ChEBI" id="CHEBI:15378"/>
        <dbReference type="ChEBI" id="CHEBI:57856"/>
        <dbReference type="ChEBI" id="CHEBI:59789"/>
        <dbReference type="ChEBI" id="CHEBI:65314"/>
        <dbReference type="ChEBI" id="CHEBI:74486"/>
        <dbReference type="EC" id="2.1.1.177"/>
    </reaction>
</comment>
<comment type="subunit">
    <text evidence="1">Homodimer.</text>
</comment>
<comment type="subcellular location">
    <subcellularLocation>
        <location evidence="1">Cytoplasm</location>
    </subcellularLocation>
</comment>
<comment type="similarity">
    <text evidence="1">Belongs to the RNA methyltransferase RlmH family.</text>
</comment>
<gene>
    <name evidence="1" type="primary">rlmH</name>
    <name type="ordered locus">SbBS512_E0615</name>
</gene>
<feature type="chain" id="PRO_0000366657" description="Ribosomal RNA large subunit methyltransferase H">
    <location>
        <begin position="1"/>
        <end position="155"/>
    </location>
</feature>
<feature type="binding site" evidence="1">
    <location>
        <position position="72"/>
    </location>
    <ligand>
        <name>S-adenosyl-L-methionine</name>
        <dbReference type="ChEBI" id="CHEBI:59789"/>
    </ligand>
</feature>
<feature type="binding site" evidence="1">
    <location>
        <position position="103"/>
    </location>
    <ligand>
        <name>S-adenosyl-L-methionine</name>
        <dbReference type="ChEBI" id="CHEBI:59789"/>
    </ligand>
</feature>
<feature type="binding site" evidence="1">
    <location>
        <begin position="122"/>
        <end position="127"/>
    </location>
    <ligand>
        <name>S-adenosyl-L-methionine</name>
        <dbReference type="ChEBI" id="CHEBI:59789"/>
    </ligand>
</feature>
<accession>B2TU82</accession>
<keyword id="KW-0963">Cytoplasm</keyword>
<keyword id="KW-0489">Methyltransferase</keyword>
<keyword id="KW-1185">Reference proteome</keyword>
<keyword id="KW-0698">rRNA processing</keyword>
<keyword id="KW-0949">S-adenosyl-L-methionine</keyword>
<keyword id="KW-0808">Transferase</keyword>